<feature type="chain" id="PRO_0000141145" description="Ribose-phosphate pyrophosphokinase">
    <location>
        <begin position="1"/>
        <end position="318"/>
    </location>
</feature>
<feature type="active site" evidence="1">
    <location>
        <position position="201"/>
    </location>
</feature>
<feature type="binding site" evidence="1">
    <location>
        <begin position="46"/>
        <end position="48"/>
    </location>
    <ligand>
        <name>ATP</name>
        <dbReference type="ChEBI" id="CHEBI:30616"/>
    </ligand>
</feature>
<feature type="binding site" evidence="1">
    <location>
        <begin position="105"/>
        <end position="106"/>
    </location>
    <ligand>
        <name>ATP</name>
        <dbReference type="ChEBI" id="CHEBI:30616"/>
    </ligand>
</feature>
<feature type="binding site" evidence="1">
    <location>
        <position position="139"/>
    </location>
    <ligand>
        <name>Mg(2+)</name>
        <dbReference type="ChEBI" id="CHEBI:18420"/>
        <label>1</label>
    </ligand>
</feature>
<feature type="binding site" evidence="1">
    <location>
        <position position="178"/>
    </location>
    <ligand>
        <name>Mg(2+)</name>
        <dbReference type="ChEBI" id="CHEBI:18420"/>
        <label>2</label>
    </ligand>
</feature>
<feature type="binding site" evidence="1">
    <location>
        <position position="203"/>
    </location>
    <ligand>
        <name>D-ribose 5-phosphate</name>
        <dbReference type="ChEBI" id="CHEBI:78346"/>
    </ligand>
</feature>
<feature type="binding site" evidence="1">
    <location>
        <position position="227"/>
    </location>
    <ligand>
        <name>D-ribose 5-phosphate</name>
        <dbReference type="ChEBI" id="CHEBI:78346"/>
    </ligand>
</feature>
<feature type="binding site" evidence="1">
    <location>
        <begin position="231"/>
        <end position="235"/>
    </location>
    <ligand>
        <name>D-ribose 5-phosphate</name>
        <dbReference type="ChEBI" id="CHEBI:78346"/>
    </ligand>
</feature>
<comment type="function">
    <text evidence="1">Involved in the biosynthesis of the central metabolite phospho-alpha-D-ribosyl-1-pyrophosphate (PRPP) via the transfer of pyrophosphoryl group from ATP to 1-hydroxyl of ribose-5-phosphate (Rib-5-P).</text>
</comment>
<comment type="catalytic activity">
    <reaction evidence="1">
        <text>D-ribose 5-phosphate + ATP = 5-phospho-alpha-D-ribose 1-diphosphate + AMP + H(+)</text>
        <dbReference type="Rhea" id="RHEA:15609"/>
        <dbReference type="ChEBI" id="CHEBI:15378"/>
        <dbReference type="ChEBI" id="CHEBI:30616"/>
        <dbReference type="ChEBI" id="CHEBI:58017"/>
        <dbReference type="ChEBI" id="CHEBI:78346"/>
        <dbReference type="ChEBI" id="CHEBI:456215"/>
        <dbReference type="EC" id="2.7.6.1"/>
    </reaction>
</comment>
<comment type="cofactor">
    <cofactor evidence="1">
        <name>Mg(2+)</name>
        <dbReference type="ChEBI" id="CHEBI:18420"/>
    </cofactor>
    <text evidence="1">Binds 2 Mg(2+) ions per subunit.</text>
</comment>
<comment type="pathway">
    <text evidence="1">Metabolic intermediate biosynthesis; 5-phospho-alpha-D-ribose 1-diphosphate biosynthesis; 5-phospho-alpha-D-ribose 1-diphosphate from D-ribose 5-phosphate (route I): step 1/1.</text>
</comment>
<comment type="subunit">
    <text evidence="1">Homohexamer.</text>
</comment>
<comment type="subcellular location">
    <subcellularLocation>
        <location evidence="1">Cytoplasm</location>
    </subcellularLocation>
</comment>
<comment type="similarity">
    <text evidence="1">Belongs to the ribose-phosphate pyrophosphokinase family. Class I subfamily.</text>
</comment>
<name>KPRS_HELPJ</name>
<dbReference type="EC" id="2.7.6.1" evidence="1"/>
<dbReference type="EMBL" id="AE001439">
    <property type="protein sequence ID" value="AAD06246.1"/>
    <property type="molecule type" value="Genomic_DNA"/>
</dbReference>
<dbReference type="PIR" id="E71903">
    <property type="entry name" value="E71903"/>
</dbReference>
<dbReference type="RefSeq" id="WP_000647440.1">
    <property type="nucleotide sequence ID" value="NC_000921.1"/>
</dbReference>
<dbReference type="SMR" id="Q9ZLA1"/>
<dbReference type="KEGG" id="hpj:jhp_0679"/>
<dbReference type="eggNOG" id="COG0462">
    <property type="taxonomic scope" value="Bacteria"/>
</dbReference>
<dbReference type="UniPathway" id="UPA00087">
    <property type="reaction ID" value="UER00172"/>
</dbReference>
<dbReference type="Proteomes" id="UP000000804">
    <property type="component" value="Chromosome"/>
</dbReference>
<dbReference type="GO" id="GO:0005737">
    <property type="term" value="C:cytoplasm"/>
    <property type="evidence" value="ECO:0007669"/>
    <property type="project" value="UniProtKB-SubCell"/>
</dbReference>
<dbReference type="GO" id="GO:0002189">
    <property type="term" value="C:ribose phosphate diphosphokinase complex"/>
    <property type="evidence" value="ECO:0007669"/>
    <property type="project" value="TreeGrafter"/>
</dbReference>
<dbReference type="GO" id="GO:0005524">
    <property type="term" value="F:ATP binding"/>
    <property type="evidence" value="ECO:0007669"/>
    <property type="project" value="UniProtKB-KW"/>
</dbReference>
<dbReference type="GO" id="GO:0016301">
    <property type="term" value="F:kinase activity"/>
    <property type="evidence" value="ECO:0007669"/>
    <property type="project" value="UniProtKB-KW"/>
</dbReference>
<dbReference type="GO" id="GO:0000287">
    <property type="term" value="F:magnesium ion binding"/>
    <property type="evidence" value="ECO:0007669"/>
    <property type="project" value="UniProtKB-UniRule"/>
</dbReference>
<dbReference type="GO" id="GO:0004749">
    <property type="term" value="F:ribose phosphate diphosphokinase activity"/>
    <property type="evidence" value="ECO:0007669"/>
    <property type="project" value="UniProtKB-UniRule"/>
</dbReference>
<dbReference type="GO" id="GO:0006015">
    <property type="term" value="P:5-phosphoribose 1-diphosphate biosynthetic process"/>
    <property type="evidence" value="ECO:0007669"/>
    <property type="project" value="UniProtKB-UniRule"/>
</dbReference>
<dbReference type="GO" id="GO:0006164">
    <property type="term" value="P:purine nucleotide biosynthetic process"/>
    <property type="evidence" value="ECO:0007669"/>
    <property type="project" value="TreeGrafter"/>
</dbReference>
<dbReference type="GO" id="GO:0009156">
    <property type="term" value="P:ribonucleoside monophosphate biosynthetic process"/>
    <property type="evidence" value="ECO:0007669"/>
    <property type="project" value="InterPro"/>
</dbReference>
<dbReference type="CDD" id="cd06223">
    <property type="entry name" value="PRTases_typeI"/>
    <property type="match status" value="1"/>
</dbReference>
<dbReference type="FunFam" id="3.40.50.2020:FF:000002">
    <property type="entry name" value="Ribose-phosphate pyrophosphokinase"/>
    <property type="match status" value="1"/>
</dbReference>
<dbReference type="FunFam" id="3.40.50.2020:FF:000007">
    <property type="entry name" value="Ribose-phosphate pyrophosphokinase"/>
    <property type="match status" value="1"/>
</dbReference>
<dbReference type="Gene3D" id="3.40.50.2020">
    <property type="match status" value="2"/>
</dbReference>
<dbReference type="HAMAP" id="MF_00583_B">
    <property type="entry name" value="RibP_PPkinase_B"/>
    <property type="match status" value="1"/>
</dbReference>
<dbReference type="InterPro" id="IPR000842">
    <property type="entry name" value="PRib_PP_synth_CS"/>
</dbReference>
<dbReference type="InterPro" id="IPR029099">
    <property type="entry name" value="Pribosyltran_N"/>
</dbReference>
<dbReference type="InterPro" id="IPR000836">
    <property type="entry name" value="PRibTrfase_dom"/>
</dbReference>
<dbReference type="InterPro" id="IPR029057">
    <property type="entry name" value="PRTase-like"/>
</dbReference>
<dbReference type="InterPro" id="IPR005946">
    <property type="entry name" value="Rib-P_diPkinase"/>
</dbReference>
<dbReference type="InterPro" id="IPR037515">
    <property type="entry name" value="Rib-P_diPkinase_bac"/>
</dbReference>
<dbReference type="NCBIfam" id="NF002320">
    <property type="entry name" value="PRK01259.1"/>
    <property type="match status" value="1"/>
</dbReference>
<dbReference type="NCBIfam" id="TIGR01251">
    <property type="entry name" value="ribP_PPkin"/>
    <property type="match status" value="1"/>
</dbReference>
<dbReference type="PANTHER" id="PTHR10210">
    <property type="entry name" value="RIBOSE-PHOSPHATE DIPHOSPHOKINASE FAMILY MEMBER"/>
    <property type="match status" value="1"/>
</dbReference>
<dbReference type="PANTHER" id="PTHR10210:SF41">
    <property type="entry name" value="RIBOSE-PHOSPHATE PYROPHOSPHOKINASE 1, CHLOROPLASTIC"/>
    <property type="match status" value="1"/>
</dbReference>
<dbReference type="Pfam" id="PF14572">
    <property type="entry name" value="Pribosyl_synth"/>
    <property type="match status" value="1"/>
</dbReference>
<dbReference type="Pfam" id="PF13793">
    <property type="entry name" value="Pribosyltran_N"/>
    <property type="match status" value="1"/>
</dbReference>
<dbReference type="SMART" id="SM01400">
    <property type="entry name" value="Pribosyltran_N"/>
    <property type="match status" value="1"/>
</dbReference>
<dbReference type="SUPFAM" id="SSF53271">
    <property type="entry name" value="PRTase-like"/>
    <property type="match status" value="1"/>
</dbReference>
<dbReference type="PROSITE" id="PS00114">
    <property type="entry name" value="PRPP_SYNTHASE"/>
    <property type="match status" value="1"/>
</dbReference>
<gene>
    <name evidence="1" type="primary">prs</name>
    <name type="synonym">prsA</name>
    <name type="ordered locus">jhp_0679</name>
</gene>
<sequence length="318" mass="34859">MKARGFKTKMRGFKIFSGSAHPAFGKEVSKHLGFPLSKAVIGKFSDGEINIQISESVRGKDIFIIQPTCVPVNDNLMELLVMVDALRRSSANSITAVLPYFGYARQDRKAAPRVPITAKMVANLMQEVGIERIITMDLHAGQIQGFFDVPVDNLYGSIVFRDYIRSKALKNPIIASPDVGGVTRARYFANQMGLDLIIVDKRREKANESEVMNIIGSAKERDVILVDDMIDTAGTICKAALALKEQGATSVMALGTHAVLSGNAIKRIKESALDEVVVTNSIPLVQKCDKITTLSVASLFAEVIRRIYHNESVQSLFT</sequence>
<evidence type="ECO:0000255" key="1">
    <source>
        <dbReference type="HAMAP-Rule" id="MF_00583"/>
    </source>
</evidence>
<reference key="1">
    <citation type="journal article" date="1999" name="Nature">
        <title>Genomic sequence comparison of two unrelated isolates of the human gastric pathogen Helicobacter pylori.</title>
        <authorList>
            <person name="Alm R.A."/>
            <person name="Ling L.-S.L."/>
            <person name="Moir D.T."/>
            <person name="King B.L."/>
            <person name="Brown E.D."/>
            <person name="Doig P.C."/>
            <person name="Smith D.R."/>
            <person name="Noonan B."/>
            <person name="Guild B.C."/>
            <person name="deJonge B.L."/>
            <person name="Carmel G."/>
            <person name="Tummino P.J."/>
            <person name="Caruso A."/>
            <person name="Uria-Nickelsen M."/>
            <person name="Mills D.M."/>
            <person name="Ives C."/>
            <person name="Gibson R."/>
            <person name="Merberg D."/>
            <person name="Mills S.D."/>
            <person name="Jiang Q."/>
            <person name="Taylor D.E."/>
            <person name="Vovis G.F."/>
            <person name="Trust T.J."/>
        </authorList>
    </citation>
    <scope>NUCLEOTIDE SEQUENCE [LARGE SCALE GENOMIC DNA]</scope>
    <source>
        <strain>J99 / ATCC 700824</strain>
    </source>
</reference>
<proteinExistence type="inferred from homology"/>
<accession>Q9ZLA1</accession>
<keyword id="KW-0067">ATP-binding</keyword>
<keyword id="KW-0963">Cytoplasm</keyword>
<keyword id="KW-0418">Kinase</keyword>
<keyword id="KW-0460">Magnesium</keyword>
<keyword id="KW-0479">Metal-binding</keyword>
<keyword id="KW-0545">Nucleotide biosynthesis</keyword>
<keyword id="KW-0547">Nucleotide-binding</keyword>
<keyword id="KW-0808">Transferase</keyword>
<protein>
    <recommendedName>
        <fullName evidence="1">Ribose-phosphate pyrophosphokinase</fullName>
        <shortName evidence="1">RPPK</shortName>
        <ecNumber evidence="1">2.7.6.1</ecNumber>
    </recommendedName>
    <alternativeName>
        <fullName evidence="1">5-phospho-D-ribosyl alpha-1-diphosphate synthase</fullName>
    </alternativeName>
    <alternativeName>
        <fullName evidence="1">Phosphoribosyl diphosphate synthase</fullName>
    </alternativeName>
    <alternativeName>
        <fullName evidence="1">Phosphoribosyl pyrophosphate synthase</fullName>
        <shortName evidence="1">P-Rib-PP synthase</shortName>
        <shortName evidence="1">PRPP synthase</shortName>
        <shortName evidence="1">PRPPase</shortName>
    </alternativeName>
</protein>
<organism>
    <name type="scientific">Helicobacter pylori (strain J99 / ATCC 700824)</name>
    <name type="common">Campylobacter pylori J99</name>
    <dbReference type="NCBI Taxonomy" id="85963"/>
    <lineage>
        <taxon>Bacteria</taxon>
        <taxon>Pseudomonadati</taxon>
        <taxon>Campylobacterota</taxon>
        <taxon>Epsilonproteobacteria</taxon>
        <taxon>Campylobacterales</taxon>
        <taxon>Helicobacteraceae</taxon>
        <taxon>Helicobacter</taxon>
    </lineage>
</organism>